<accession>P65458</accession>
<accession>Q48ZL6</accession>
<accession>Q9A0I4</accession>
<feature type="chain" id="PRO_0000178934" description="UDP-N-acetylglucosamine 1-carboxyvinyltransferase 1">
    <location>
        <begin position="1"/>
        <end position="423"/>
    </location>
</feature>
<feature type="active site" description="Proton donor" evidence="1">
    <location>
        <position position="120"/>
    </location>
</feature>
<feature type="binding site" evidence="1">
    <location>
        <begin position="23"/>
        <end position="24"/>
    </location>
    <ligand>
        <name>phosphoenolpyruvate</name>
        <dbReference type="ChEBI" id="CHEBI:58702"/>
    </ligand>
</feature>
<feature type="binding site" evidence="1">
    <location>
        <position position="96"/>
    </location>
    <ligand>
        <name>UDP-N-acetyl-alpha-D-glucosamine</name>
        <dbReference type="ChEBI" id="CHEBI:57705"/>
    </ligand>
</feature>
<feature type="binding site" evidence="1">
    <location>
        <position position="309"/>
    </location>
    <ligand>
        <name>UDP-N-acetyl-alpha-D-glucosamine</name>
        <dbReference type="ChEBI" id="CHEBI:57705"/>
    </ligand>
</feature>
<feature type="binding site" evidence="1">
    <location>
        <position position="331"/>
    </location>
    <ligand>
        <name>UDP-N-acetyl-alpha-D-glucosamine</name>
        <dbReference type="ChEBI" id="CHEBI:57705"/>
    </ligand>
</feature>
<feature type="modified residue" description="2-(S-cysteinyl)pyruvic acid O-phosphothioketal" evidence="1">
    <location>
        <position position="120"/>
    </location>
</feature>
<proteinExistence type="inferred from homology"/>
<comment type="function">
    <text evidence="1">Cell wall formation. Adds enolpyruvyl to UDP-N-acetylglucosamine.</text>
</comment>
<comment type="catalytic activity">
    <reaction evidence="1">
        <text>phosphoenolpyruvate + UDP-N-acetyl-alpha-D-glucosamine = UDP-N-acetyl-3-O-(1-carboxyvinyl)-alpha-D-glucosamine + phosphate</text>
        <dbReference type="Rhea" id="RHEA:18681"/>
        <dbReference type="ChEBI" id="CHEBI:43474"/>
        <dbReference type="ChEBI" id="CHEBI:57705"/>
        <dbReference type="ChEBI" id="CHEBI:58702"/>
        <dbReference type="ChEBI" id="CHEBI:68483"/>
        <dbReference type="EC" id="2.5.1.7"/>
    </reaction>
</comment>
<comment type="pathway">
    <text evidence="1">Cell wall biogenesis; peptidoglycan biosynthesis.</text>
</comment>
<comment type="subcellular location">
    <subcellularLocation>
        <location evidence="1">Cytoplasm</location>
    </subcellularLocation>
</comment>
<comment type="similarity">
    <text evidence="1">Belongs to the EPSP synthase family. MurA subfamily.</text>
</comment>
<comment type="sequence caution" evidence="2">
    <conflict type="erroneous initiation">
        <sequence resource="EMBL-CDS" id="AAZ51202"/>
    </conflict>
</comment>
<organism>
    <name type="scientific">Streptococcus pyogenes serotype M1</name>
    <dbReference type="NCBI Taxonomy" id="301447"/>
    <lineage>
        <taxon>Bacteria</taxon>
        <taxon>Bacillati</taxon>
        <taxon>Bacillota</taxon>
        <taxon>Bacilli</taxon>
        <taxon>Lactobacillales</taxon>
        <taxon>Streptococcaceae</taxon>
        <taxon>Streptococcus</taxon>
    </lineage>
</organism>
<name>MURA1_STRP1</name>
<gene>
    <name evidence="1" type="primary">murA1</name>
    <name type="synonym">murA</name>
    <name type="ordered locus">SPy_0763</name>
    <name type="ordered locus">M5005_Spy0584</name>
</gene>
<reference key="1">
    <citation type="journal article" date="2001" name="Proc. Natl. Acad. Sci. U.S.A.">
        <title>Complete genome sequence of an M1 strain of Streptococcus pyogenes.</title>
        <authorList>
            <person name="Ferretti J.J."/>
            <person name="McShan W.M."/>
            <person name="Ajdic D.J."/>
            <person name="Savic D.J."/>
            <person name="Savic G."/>
            <person name="Lyon K."/>
            <person name="Primeaux C."/>
            <person name="Sezate S."/>
            <person name="Suvorov A.N."/>
            <person name="Kenton S."/>
            <person name="Lai H.S."/>
            <person name="Lin S.P."/>
            <person name="Qian Y."/>
            <person name="Jia H.G."/>
            <person name="Najar F.Z."/>
            <person name="Ren Q."/>
            <person name="Zhu H."/>
            <person name="Song L."/>
            <person name="White J."/>
            <person name="Yuan X."/>
            <person name="Clifton S.W."/>
            <person name="Roe B.A."/>
            <person name="McLaughlin R.E."/>
        </authorList>
    </citation>
    <scope>NUCLEOTIDE SEQUENCE [LARGE SCALE GENOMIC DNA]</scope>
    <source>
        <strain>ATCC 700294 / SF370 / Serotype M1</strain>
    </source>
</reference>
<reference key="2">
    <citation type="journal article" date="2005" name="J. Infect. Dis.">
        <title>Evolutionary origin and emergence of a highly successful clone of serotype M1 group A Streptococcus involved multiple horizontal gene transfer events.</title>
        <authorList>
            <person name="Sumby P."/>
            <person name="Porcella S.F."/>
            <person name="Madrigal A.G."/>
            <person name="Barbian K.D."/>
            <person name="Virtaneva K."/>
            <person name="Ricklefs S.M."/>
            <person name="Sturdevant D.E."/>
            <person name="Graham M.R."/>
            <person name="Vuopio-Varkila J."/>
            <person name="Hoe N.P."/>
            <person name="Musser J.M."/>
        </authorList>
    </citation>
    <scope>NUCLEOTIDE SEQUENCE [LARGE SCALE GENOMIC DNA]</scope>
    <source>
        <strain>ATCC BAA-947 / MGAS5005 / Serotype M1</strain>
    </source>
</reference>
<evidence type="ECO:0000255" key="1">
    <source>
        <dbReference type="HAMAP-Rule" id="MF_00111"/>
    </source>
</evidence>
<evidence type="ECO:0000305" key="2"/>
<protein>
    <recommendedName>
        <fullName evidence="1">UDP-N-acetylglucosamine 1-carboxyvinyltransferase 1</fullName>
        <ecNumber evidence="1">2.5.1.7</ecNumber>
    </recommendedName>
    <alternativeName>
        <fullName evidence="1">Enoylpyruvate transferase 1</fullName>
    </alternativeName>
    <alternativeName>
        <fullName evidence="1">UDP-N-acetylglucosamine enolpyruvyl transferase 1</fullName>
        <shortName evidence="1">EPT 1</shortName>
    </alternativeName>
</protein>
<sequence>MDKIIIEGGQTRLEGEVVIEGAKNAVLPLLAASILPSKGKTILRNVPILSDVFTMNNVVRGLDIRVDFNEAANEITVDASGHILDEAPYEYVSQMRASIVVLGPILARNGHAKVSMPGGCTIGSRPINLHLKGLEAMGATITQKGGDITAQADRLQGAMIYMDFPSVGATQNLMMAATLADGVTTIENAAREPEIVDLAQFLNKMGARIRGAGTETLTITGVTHLRGVEHDVVQDRIEAGTFMVAAAMTSGNVLIRDAVWEHNRPLISKLMEMGVSVTEEEYGIRVQANTPKLKPVTVKTLPHPGFPTDMQAQFTALMAVVNGESTMVETVFENRFQHLEEMRRMGLQSEILRETAMIHGGRQLQGAPVMSTDLRASAALILTGIVAQGVTIVNNLVHLDRGYYQFHEKLAKLGATISRSSEV</sequence>
<keyword id="KW-0131">Cell cycle</keyword>
<keyword id="KW-0132">Cell division</keyword>
<keyword id="KW-0133">Cell shape</keyword>
<keyword id="KW-0961">Cell wall biogenesis/degradation</keyword>
<keyword id="KW-0963">Cytoplasm</keyword>
<keyword id="KW-0573">Peptidoglycan synthesis</keyword>
<keyword id="KW-0670">Pyruvate</keyword>
<keyword id="KW-1185">Reference proteome</keyword>
<keyword id="KW-0808">Transferase</keyword>
<dbReference type="EC" id="2.5.1.7" evidence="1"/>
<dbReference type="EMBL" id="AE004092">
    <property type="protein sequence ID" value="AAK33706.1"/>
    <property type="molecule type" value="Genomic_DNA"/>
</dbReference>
<dbReference type="EMBL" id="CP000017">
    <property type="protein sequence ID" value="AAZ51202.1"/>
    <property type="status" value="ALT_INIT"/>
    <property type="molecule type" value="Genomic_DNA"/>
</dbReference>
<dbReference type="RefSeq" id="NP_268985.1">
    <property type="nucleotide sequence ID" value="NC_002737.2"/>
</dbReference>
<dbReference type="SMR" id="P65458"/>
<dbReference type="PaxDb" id="1314-HKU360_00594"/>
<dbReference type="KEGG" id="spy:SPy_0763"/>
<dbReference type="KEGG" id="spz:M5005_Spy0584"/>
<dbReference type="PATRIC" id="fig|160490.10.peg.651"/>
<dbReference type="HOGENOM" id="CLU_027387_0_0_9"/>
<dbReference type="OMA" id="MIEIGSW"/>
<dbReference type="UniPathway" id="UPA00219"/>
<dbReference type="Proteomes" id="UP000000750">
    <property type="component" value="Chromosome"/>
</dbReference>
<dbReference type="GO" id="GO:0005737">
    <property type="term" value="C:cytoplasm"/>
    <property type="evidence" value="ECO:0007669"/>
    <property type="project" value="UniProtKB-SubCell"/>
</dbReference>
<dbReference type="GO" id="GO:0008760">
    <property type="term" value="F:UDP-N-acetylglucosamine 1-carboxyvinyltransferase activity"/>
    <property type="evidence" value="ECO:0007669"/>
    <property type="project" value="UniProtKB-UniRule"/>
</dbReference>
<dbReference type="GO" id="GO:0051301">
    <property type="term" value="P:cell division"/>
    <property type="evidence" value="ECO:0007669"/>
    <property type="project" value="UniProtKB-KW"/>
</dbReference>
<dbReference type="GO" id="GO:0071555">
    <property type="term" value="P:cell wall organization"/>
    <property type="evidence" value="ECO:0007669"/>
    <property type="project" value="UniProtKB-KW"/>
</dbReference>
<dbReference type="GO" id="GO:0009252">
    <property type="term" value="P:peptidoglycan biosynthetic process"/>
    <property type="evidence" value="ECO:0007669"/>
    <property type="project" value="UniProtKB-UniRule"/>
</dbReference>
<dbReference type="GO" id="GO:0008360">
    <property type="term" value="P:regulation of cell shape"/>
    <property type="evidence" value="ECO:0007669"/>
    <property type="project" value="UniProtKB-KW"/>
</dbReference>
<dbReference type="GO" id="GO:0019277">
    <property type="term" value="P:UDP-N-acetylgalactosamine biosynthetic process"/>
    <property type="evidence" value="ECO:0007669"/>
    <property type="project" value="InterPro"/>
</dbReference>
<dbReference type="CDD" id="cd01555">
    <property type="entry name" value="UdpNAET"/>
    <property type="match status" value="1"/>
</dbReference>
<dbReference type="FunFam" id="3.65.10.10:FF:000001">
    <property type="entry name" value="UDP-N-acetylglucosamine 1-carboxyvinyltransferase"/>
    <property type="match status" value="1"/>
</dbReference>
<dbReference type="Gene3D" id="3.65.10.10">
    <property type="entry name" value="Enolpyruvate transferase domain"/>
    <property type="match status" value="2"/>
</dbReference>
<dbReference type="HAMAP" id="MF_00111">
    <property type="entry name" value="MurA"/>
    <property type="match status" value="1"/>
</dbReference>
<dbReference type="InterPro" id="IPR001986">
    <property type="entry name" value="Enolpyruvate_Tfrase_dom"/>
</dbReference>
<dbReference type="InterPro" id="IPR036968">
    <property type="entry name" value="Enolpyruvate_Tfrase_sf"/>
</dbReference>
<dbReference type="InterPro" id="IPR050068">
    <property type="entry name" value="MurA_subfamily"/>
</dbReference>
<dbReference type="InterPro" id="IPR013792">
    <property type="entry name" value="RNA3'P_cycl/enolpyr_Trfase_a/b"/>
</dbReference>
<dbReference type="InterPro" id="IPR005750">
    <property type="entry name" value="UDP_GlcNAc_COvinyl_MurA"/>
</dbReference>
<dbReference type="NCBIfam" id="TIGR01072">
    <property type="entry name" value="murA"/>
    <property type="match status" value="1"/>
</dbReference>
<dbReference type="NCBIfam" id="NF006873">
    <property type="entry name" value="PRK09369.1"/>
    <property type="match status" value="1"/>
</dbReference>
<dbReference type="PANTHER" id="PTHR43783">
    <property type="entry name" value="UDP-N-ACETYLGLUCOSAMINE 1-CARBOXYVINYLTRANSFERASE"/>
    <property type="match status" value="1"/>
</dbReference>
<dbReference type="PANTHER" id="PTHR43783:SF1">
    <property type="entry name" value="UDP-N-ACETYLGLUCOSAMINE 1-CARBOXYVINYLTRANSFERASE"/>
    <property type="match status" value="1"/>
</dbReference>
<dbReference type="Pfam" id="PF00275">
    <property type="entry name" value="EPSP_synthase"/>
    <property type="match status" value="1"/>
</dbReference>
<dbReference type="SUPFAM" id="SSF55205">
    <property type="entry name" value="EPT/RTPC-like"/>
    <property type="match status" value="1"/>
</dbReference>